<gene>
    <name evidence="1" type="primary">der</name>
    <name type="synonym">engA</name>
    <name type="ordered locus">Nham_1686</name>
</gene>
<sequence length="460" mass="50815">MSFTIAIIGRPNVGKSTLFNRLVGQKLALVDDKPGVTRDRREGQARLGDLDFTVIDTAGLDEGPRGSLTARMQEQTETAIAAADALMFVFDARAGLTPTDRSFADFARRANKPVVLVANKSEGRHGEAGALESYALGLGDPVGVSAEHGEGMSDLYDALRGVMPEPTEEAEEFDDDDIIESEDISQRPIRVAIVGRPNAGKSTLINYLLGEERLLTSPEAGTTRDSISVELNWQGRDFRIFDTAGLRRRSRIEEKLEKLSVADTLRAARFAEVVVLMMDAQNRFEEQDLRIADLIEREGRALVIAVNKWDLMGRQSSLIAALRTDADHLLPQVKGMPIVAVSGLMGEGVDRLMTAIQDAYAIWNRRVPTAALNRWFEQAVDANPPPAVSGRRLKLNYVTQAKARPPSFIVFCSRADAVPESYLRYLVNSLRGFFDLPGTPIRITLREKANPFAHKRKRKS</sequence>
<accession>Q1QMP4</accession>
<reference key="1">
    <citation type="submission" date="2006-03" db="EMBL/GenBank/DDBJ databases">
        <title>Complete sequence of chromosome of Nitrobacter hamburgensis X14.</title>
        <authorList>
            <consortium name="US DOE Joint Genome Institute"/>
            <person name="Copeland A."/>
            <person name="Lucas S."/>
            <person name="Lapidus A."/>
            <person name="Barry K."/>
            <person name="Detter J.C."/>
            <person name="Glavina del Rio T."/>
            <person name="Hammon N."/>
            <person name="Israni S."/>
            <person name="Dalin E."/>
            <person name="Tice H."/>
            <person name="Pitluck S."/>
            <person name="Chain P."/>
            <person name="Malfatti S."/>
            <person name="Shin M."/>
            <person name="Vergez L."/>
            <person name="Schmutz J."/>
            <person name="Larimer F."/>
            <person name="Land M."/>
            <person name="Hauser L."/>
            <person name="Kyrpides N."/>
            <person name="Ivanova N."/>
            <person name="Ward B."/>
            <person name="Arp D."/>
            <person name="Klotz M."/>
            <person name="Stein L."/>
            <person name="O'Mullan G."/>
            <person name="Starkenburg S."/>
            <person name="Sayavedra L."/>
            <person name="Poret-Peterson A.T."/>
            <person name="Gentry M.E."/>
            <person name="Bruce D."/>
            <person name="Richardson P."/>
        </authorList>
    </citation>
    <scope>NUCLEOTIDE SEQUENCE [LARGE SCALE GENOMIC DNA]</scope>
    <source>
        <strain>DSM 10229 / NCIMB 13809 / X14</strain>
    </source>
</reference>
<organism>
    <name type="scientific">Nitrobacter hamburgensis (strain DSM 10229 / NCIMB 13809 / X14)</name>
    <dbReference type="NCBI Taxonomy" id="323097"/>
    <lineage>
        <taxon>Bacteria</taxon>
        <taxon>Pseudomonadati</taxon>
        <taxon>Pseudomonadota</taxon>
        <taxon>Alphaproteobacteria</taxon>
        <taxon>Hyphomicrobiales</taxon>
        <taxon>Nitrobacteraceae</taxon>
        <taxon>Nitrobacter</taxon>
    </lineage>
</organism>
<feature type="chain" id="PRO_1000011677" description="GTPase Der">
    <location>
        <begin position="1"/>
        <end position="460"/>
    </location>
</feature>
<feature type="domain" description="EngA-type G 1">
    <location>
        <begin position="3"/>
        <end position="167"/>
    </location>
</feature>
<feature type="domain" description="EngA-type G 2">
    <location>
        <begin position="189"/>
        <end position="364"/>
    </location>
</feature>
<feature type="domain" description="KH-like" evidence="1">
    <location>
        <begin position="365"/>
        <end position="449"/>
    </location>
</feature>
<feature type="binding site" evidence="1">
    <location>
        <begin position="9"/>
        <end position="16"/>
    </location>
    <ligand>
        <name>GTP</name>
        <dbReference type="ChEBI" id="CHEBI:37565"/>
        <label>1</label>
    </ligand>
</feature>
<feature type="binding site" evidence="1">
    <location>
        <begin position="56"/>
        <end position="60"/>
    </location>
    <ligand>
        <name>GTP</name>
        <dbReference type="ChEBI" id="CHEBI:37565"/>
        <label>1</label>
    </ligand>
</feature>
<feature type="binding site" evidence="1">
    <location>
        <begin position="119"/>
        <end position="122"/>
    </location>
    <ligand>
        <name>GTP</name>
        <dbReference type="ChEBI" id="CHEBI:37565"/>
        <label>1</label>
    </ligand>
</feature>
<feature type="binding site" evidence="1">
    <location>
        <begin position="195"/>
        <end position="202"/>
    </location>
    <ligand>
        <name>GTP</name>
        <dbReference type="ChEBI" id="CHEBI:37565"/>
        <label>2</label>
    </ligand>
</feature>
<feature type="binding site" evidence="1">
    <location>
        <begin position="242"/>
        <end position="246"/>
    </location>
    <ligand>
        <name>GTP</name>
        <dbReference type="ChEBI" id="CHEBI:37565"/>
        <label>2</label>
    </ligand>
</feature>
<feature type="binding site" evidence="1">
    <location>
        <begin position="307"/>
        <end position="310"/>
    </location>
    <ligand>
        <name>GTP</name>
        <dbReference type="ChEBI" id="CHEBI:37565"/>
        <label>2</label>
    </ligand>
</feature>
<dbReference type="EMBL" id="CP000319">
    <property type="protein sequence ID" value="ABE62503.1"/>
    <property type="molecule type" value="Genomic_DNA"/>
</dbReference>
<dbReference type="RefSeq" id="WP_011510185.1">
    <property type="nucleotide sequence ID" value="NC_007964.1"/>
</dbReference>
<dbReference type="SMR" id="Q1QMP4"/>
<dbReference type="STRING" id="323097.Nham_1686"/>
<dbReference type="KEGG" id="nha:Nham_1686"/>
<dbReference type="eggNOG" id="COG1160">
    <property type="taxonomic scope" value="Bacteria"/>
</dbReference>
<dbReference type="HOGENOM" id="CLU_016077_5_0_5"/>
<dbReference type="OrthoDB" id="9805918at2"/>
<dbReference type="Proteomes" id="UP000001953">
    <property type="component" value="Chromosome"/>
</dbReference>
<dbReference type="GO" id="GO:0005525">
    <property type="term" value="F:GTP binding"/>
    <property type="evidence" value="ECO:0007669"/>
    <property type="project" value="UniProtKB-UniRule"/>
</dbReference>
<dbReference type="GO" id="GO:0042254">
    <property type="term" value="P:ribosome biogenesis"/>
    <property type="evidence" value="ECO:0007669"/>
    <property type="project" value="UniProtKB-KW"/>
</dbReference>
<dbReference type="CDD" id="cd01894">
    <property type="entry name" value="EngA1"/>
    <property type="match status" value="1"/>
</dbReference>
<dbReference type="CDD" id="cd01895">
    <property type="entry name" value="EngA2"/>
    <property type="match status" value="1"/>
</dbReference>
<dbReference type="FunFam" id="3.30.300.20:FF:000004">
    <property type="entry name" value="GTPase Der"/>
    <property type="match status" value="1"/>
</dbReference>
<dbReference type="FunFam" id="3.40.50.300:FF:000040">
    <property type="entry name" value="GTPase Der"/>
    <property type="match status" value="1"/>
</dbReference>
<dbReference type="FunFam" id="3.40.50.300:FF:000057">
    <property type="entry name" value="GTPase Der"/>
    <property type="match status" value="1"/>
</dbReference>
<dbReference type="Gene3D" id="3.30.300.20">
    <property type="match status" value="1"/>
</dbReference>
<dbReference type="Gene3D" id="3.40.50.300">
    <property type="entry name" value="P-loop containing nucleotide triphosphate hydrolases"/>
    <property type="match status" value="2"/>
</dbReference>
<dbReference type="HAMAP" id="MF_00195">
    <property type="entry name" value="GTPase_Der"/>
    <property type="match status" value="1"/>
</dbReference>
<dbReference type="InterPro" id="IPR031166">
    <property type="entry name" value="G_ENGA"/>
</dbReference>
<dbReference type="InterPro" id="IPR006073">
    <property type="entry name" value="GTP-bd"/>
</dbReference>
<dbReference type="InterPro" id="IPR016484">
    <property type="entry name" value="GTPase_Der"/>
</dbReference>
<dbReference type="InterPro" id="IPR032859">
    <property type="entry name" value="KH_dom-like"/>
</dbReference>
<dbReference type="InterPro" id="IPR015946">
    <property type="entry name" value="KH_dom-like_a/b"/>
</dbReference>
<dbReference type="InterPro" id="IPR027417">
    <property type="entry name" value="P-loop_NTPase"/>
</dbReference>
<dbReference type="InterPro" id="IPR005225">
    <property type="entry name" value="Small_GTP-bd"/>
</dbReference>
<dbReference type="NCBIfam" id="TIGR03594">
    <property type="entry name" value="GTPase_EngA"/>
    <property type="match status" value="1"/>
</dbReference>
<dbReference type="NCBIfam" id="TIGR00231">
    <property type="entry name" value="small_GTP"/>
    <property type="match status" value="2"/>
</dbReference>
<dbReference type="PANTHER" id="PTHR43834">
    <property type="entry name" value="GTPASE DER"/>
    <property type="match status" value="1"/>
</dbReference>
<dbReference type="PANTHER" id="PTHR43834:SF6">
    <property type="entry name" value="GTPASE DER"/>
    <property type="match status" value="1"/>
</dbReference>
<dbReference type="Pfam" id="PF14714">
    <property type="entry name" value="KH_dom-like"/>
    <property type="match status" value="1"/>
</dbReference>
<dbReference type="Pfam" id="PF01926">
    <property type="entry name" value="MMR_HSR1"/>
    <property type="match status" value="2"/>
</dbReference>
<dbReference type="PIRSF" id="PIRSF006485">
    <property type="entry name" value="GTP-binding_EngA"/>
    <property type="match status" value="1"/>
</dbReference>
<dbReference type="PRINTS" id="PR00326">
    <property type="entry name" value="GTP1OBG"/>
</dbReference>
<dbReference type="SUPFAM" id="SSF52540">
    <property type="entry name" value="P-loop containing nucleoside triphosphate hydrolases"/>
    <property type="match status" value="2"/>
</dbReference>
<dbReference type="PROSITE" id="PS51712">
    <property type="entry name" value="G_ENGA"/>
    <property type="match status" value="2"/>
</dbReference>
<protein>
    <recommendedName>
        <fullName evidence="1">GTPase Der</fullName>
    </recommendedName>
    <alternativeName>
        <fullName evidence="1">GTP-binding protein EngA</fullName>
    </alternativeName>
</protein>
<evidence type="ECO:0000255" key="1">
    <source>
        <dbReference type="HAMAP-Rule" id="MF_00195"/>
    </source>
</evidence>
<keyword id="KW-0342">GTP-binding</keyword>
<keyword id="KW-0547">Nucleotide-binding</keyword>
<keyword id="KW-1185">Reference proteome</keyword>
<keyword id="KW-0677">Repeat</keyword>
<keyword id="KW-0690">Ribosome biogenesis</keyword>
<proteinExistence type="inferred from homology"/>
<name>DER_NITHX</name>
<comment type="function">
    <text evidence="1">GTPase that plays an essential role in the late steps of ribosome biogenesis.</text>
</comment>
<comment type="subunit">
    <text evidence="1">Associates with the 50S ribosomal subunit.</text>
</comment>
<comment type="similarity">
    <text evidence="1">Belongs to the TRAFAC class TrmE-Era-EngA-EngB-Septin-like GTPase superfamily. EngA (Der) GTPase family.</text>
</comment>